<organism>
    <name type="scientific">Saccharomyces cerevisiae (strain ATCC 204508 / S288c)</name>
    <name type="common">Baker's yeast</name>
    <dbReference type="NCBI Taxonomy" id="559292"/>
    <lineage>
        <taxon>Eukaryota</taxon>
        <taxon>Fungi</taxon>
        <taxon>Dikarya</taxon>
        <taxon>Ascomycota</taxon>
        <taxon>Saccharomycotina</taxon>
        <taxon>Saccharomycetes</taxon>
        <taxon>Saccharomycetales</taxon>
        <taxon>Saccharomycetaceae</taxon>
        <taxon>Saccharomyces</taxon>
    </lineage>
</organism>
<protein>
    <recommendedName>
        <fullName>Vacuolar lysine transporter YPQ1</fullName>
    </recommendedName>
    <alternativeName>
        <fullName>PQ-loop repeat-containing protein 1</fullName>
    </alternativeName>
</protein>
<sequence>MQLVPLELNRSTLSGISGSISISCWIIVFVPQIYENFYRKSSDGLSLLFVVLWLAGDVFNLMGAVMQHLLSTMIILAAYYTVADIILLGQCLWYDNEEKPAVDPIHLSPANPINENVLHDVFNEQQPLLNSQGQPNRIDEEMAAPSSDGNAGDDNLREVNSRNLIKDIFIVSGVVFVGFISWYVTYCVNYTQPPPVEDPSLPVPELQINWMAQIFGYLSALLYLGSRIPQILLNFKRKSCEGISFLFFLFACLGNTTFIFSVIVISLDWKYLIMNASWLVGSIGTLFMDFVIFSQFFIYKRNKKFILN</sequence>
<comment type="function">
    <text evidence="4 5 6">Amino acid transporter that moves lysine into the vacuole (PubMed:25229858). May also contribute to low affinity arginine import into the vacuole (PubMed:32776922). Has also been suggested to mediate export of cationic amino acids from the vacuole (PubMed:23169667). May function as an amino acid/proton antiporter (PubMed:25229858).</text>
</comment>
<comment type="subcellular location">
    <subcellularLocation>
        <location evidence="2 4 5">Vacuole membrane</location>
        <topology evidence="2 4">Multi-pass membrane protein</topology>
    </subcellularLocation>
</comment>
<comment type="disruption phenotype">
    <text evidence="4 5">Severely impairs lysine import into the vacuole, and partially decreases arginine import (PubMed:25229858). Resistant to canavanine (PubMed:23169667).</text>
</comment>
<comment type="miscellaneous">
    <text evidence="3">Present with 1800 molecules/cell in log phase SD medium.</text>
</comment>
<comment type="similarity">
    <text evidence="7">Belongs to the laat-1 family.</text>
</comment>
<accession>Q12010</accession>
<accession>D6W1X6</accession>
<dbReference type="EMBL" id="Z74834">
    <property type="protein sequence ID" value="CAA99104.1"/>
    <property type="molecule type" value="Genomic_DNA"/>
</dbReference>
<dbReference type="EMBL" id="X83121">
    <property type="protein sequence ID" value="CAA58187.1"/>
    <property type="molecule type" value="Genomic_DNA"/>
</dbReference>
<dbReference type="EMBL" id="BK006948">
    <property type="protein sequence ID" value="DAA10692.1"/>
    <property type="molecule type" value="Genomic_DNA"/>
</dbReference>
<dbReference type="PIR" id="S57377">
    <property type="entry name" value="S57377"/>
</dbReference>
<dbReference type="RefSeq" id="NP_014549.1">
    <property type="nucleotide sequence ID" value="NM_001183346.1"/>
</dbReference>
<dbReference type="SMR" id="Q12010"/>
<dbReference type="BioGRID" id="34310">
    <property type="interactions" value="56"/>
</dbReference>
<dbReference type="DIP" id="DIP-8883N"/>
<dbReference type="FunCoup" id="Q12010">
    <property type="interactions" value="431"/>
</dbReference>
<dbReference type="IntAct" id="Q12010">
    <property type="interactions" value="2"/>
</dbReference>
<dbReference type="STRING" id="4932.YOL092W"/>
<dbReference type="TCDB" id="2.A.43.2.3">
    <property type="family name" value="the lysosomal cystine transporter (lct) family"/>
</dbReference>
<dbReference type="GlyCosmos" id="Q12010">
    <property type="glycosylation" value="3 sites, No reported glycans"/>
</dbReference>
<dbReference type="GlyGen" id="Q12010">
    <property type="glycosylation" value="3 sites"/>
</dbReference>
<dbReference type="iPTMnet" id="Q12010"/>
<dbReference type="PaxDb" id="4932-YOL092W"/>
<dbReference type="PeptideAtlas" id="Q12010"/>
<dbReference type="EnsemblFungi" id="YOL092W_mRNA">
    <property type="protein sequence ID" value="YOL092W"/>
    <property type="gene ID" value="YOL092W"/>
</dbReference>
<dbReference type="GeneID" id="854061"/>
<dbReference type="KEGG" id="sce:YOL092W"/>
<dbReference type="AGR" id="SGD:S000005452"/>
<dbReference type="SGD" id="S000005452">
    <property type="gene designation" value="YPQ1"/>
</dbReference>
<dbReference type="VEuPathDB" id="FungiDB:YOL092W"/>
<dbReference type="eggNOG" id="KOG2913">
    <property type="taxonomic scope" value="Eukaryota"/>
</dbReference>
<dbReference type="GeneTree" id="ENSGT00940000176777"/>
<dbReference type="HOGENOM" id="CLU_019699_1_0_1"/>
<dbReference type="InParanoid" id="Q12010"/>
<dbReference type="OMA" id="LIMNASW"/>
<dbReference type="OrthoDB" id="8048523at2759"/>
<dbReference type="BioCyc" id="YEAST:G3O-33492-MONOMER"/>
<dbReference type="Reactome" id="R-SCE-5223345">
    <property type="pathway name" value="Miscellaneous transport and binding events"/>
</dbReference>
<dbReference type="BioGRID-ORCS" id="854061">
    <property type="hits" value="1 hit in 10 CRISPR screens"/>
</dbReference>
<dbReference type="PRO" id="PR:Q12010"/>
<dbReference type="Proteomes" id="UP000002311">
    <property type="component" value="Chromosome XV"/>
</dbReference>
<dbReference type="RNAct" id="Q12010">
    <property type="molecule type" value="protein"/>
</dbReference>
<dbReference type="GO" id="GO:0005737">
    <property type="term" value="C:cytoplasm"/>
    <property type="evidence" value="ECO:0007005"/>
    <property type="project" value="SGD"/>
</dbReference>
<dbReference type="GO" id="GO:0005783">
    <property type="term" value="C:endoplasmic reticulum"/>
    <property type="evidence" value="ECO:0007005"/>
    <property type="project" value="SGD"/>
</dbReference>
<dbReference type="GO" id="GO:0000329">
    <property type="term" value="C:fungal-type vacuole membrane"/>
    <property type="evidence" value="ECO:0000314"/>
    <property type="project" value="UniProtKB"/>
</dbReference>
<dbReference type="GO" id="GO:0016020">
    <property type="term" value="C:membrane"/>
    <property type="evidence" value="ECO:0000318"/>
    <property type="project" value="GO_Central"/>
</dbReference>
<dbReference type="GO" id="GO:0015174">
    <property type="term" value="F:basic amino acid transmembrane transporter activity"/>
    <property type="evidence" value="ECO:0000315"/>
    <property type="project" value="SGD"/>
</dbReference>
<dbReference type="GO" id="GO:0015189">
    <property type="term" value="F:L-lysine transmembrane transporter activity"/>
    <property type="evidence" value="ECO:0000315"/>
    <property type="project" value="UniProtKB"/>
</dbReference>
<dbReference type="GO" id="GO:0034488">
    <property type="term" value="P:basic amino acid transmembrane export from vacuole"/>
    <property type="evidence" value="ECO:0000315"/>
    <property type="project" value="SGD"/>
</dbReference>
<dbReference type="GO" id="GO:0090517">
    <property type="term" value="P:L-lysine transmembrane import into vacuole"/>
    <property type="evidence" value="ECO:0000315"/>
    <property type="project" value="UniProtKB"/>
</dbReference>
<dbReference type="FunFam" id="1.20.1280.290:FF:000011">
    <property type="entry name" value="PQ loop repeat protein"/>
    <property type="match status" value="1"/>
</dbReference>
<dbReference type="FunFam" id="1.20.1280.290:FF:000012">
    <property type="entry name" value="Vacuolar membrane PQ loop repeat protein"/>
    <property type="match status" value="1"/>
</dbReference>
<dbReference type="Gene3D" id="1.20.1280.290">
    <property type="match status" value="2"/>
</dbReference>
<dbReference type="InterPro" id="IPR051415">
    <property type="entry name" value="LAAT-1"/>
</dbReference>
<dbReference type="InterPro" id="IPR006603">
    <property type="entry name" value="PQ-loop_rpt"/>
</dbReference>
<dbReference type="PANTHER" id="PTHR16201">
    <property type="entry name" value="SEVEN TRANSMEMBRANE PROTEIN 1-RELATED"/>
    <property type="match status" value="1"/>
</dbReference>
<dbReference type="PANTHER" id="PTHR16201:SF35">
    <property type="entry name" value="VACUOLAR AMINO ACID TRANSPORTER YPQ1-RELATED"/>
    <property type="match status" value="1"/>
</dbReference>
<dbReference type="Pfam" id="PF04193">
    <property type="entry name" value="PQ-loop"/>
    <property type="match status" value="2"/>
</dbReference>
<dbReference type="SMART" id="SM00679">
    <property type="entry name" value="CTNS"/>
    <property type="match status" value="2"/>
</dbReference>
<feature type="chain" id="PRO_0000235929" description="Vacuolar lysine transporter YPQ1">
    <location>
        <begin position="1"/>
        <end position="308"/>
    </location>
</feature>
<feature type="topological domain" description="Vacuolar" evidence="1">
    <location>
        <begin position="1"/>
        <end position="12"/>
    </location>
</feature>
<feature type="transmembrane region" description="Helical" evidence="1">
    <location>
        <begin position="13"/>
        <end position="33"/>
    </location>
</feature>
<feature type="topological domain" description="Cytoplasmic" evidence="1">
    <location>
        <begin position="34"/>
        <end position="44"/>
    </location>
</feature>
<feature type="transmembrane region" description="Helical" evidence="1">
    <location>
        <begin position="45"/>
        <end position="65"/>
    </location>
</feature>
<feature type="topological domain" description="Vacuolar" evidence="1">
    <location>
        <begin position="66"/>
        <end position="68"/>
    </location>
</feature>
<feature type="transmembrane region" description="Helical" evidence="1">
    <location>
        <begin position="69"/>
        <end position="89"/>
    </location>
</feature>
<feature type="topological domain" description="Cytoplasmic" evidence="1">
    <location>
        <begin position="90"/>
        <end position="167"/>
    </location>
</feature>
<feature type="transmembrane region" description="Helical" evidence="1">
    <location>
        <begin position="168"/>
        <end position="188"/>
    </location>
</feature>
<feature type="topological domain" description="Vacuolar" evidence="1">
    <location>
        <begin position="189"/>
        <end position="205"/>
    </location>
</feature>
<feature type="transmembrane region" description="Helical" evidence="1">
    <location>
        <begin position="206"/>
        <end position="226"/>
    </location>
</feature>
<feature type="topological domain" description="Cytoplasmic" evidence="1">
    <location>
        <begin position="227"/>
        <end position="244"/>
    </location>
</feature>
<feature type="transmembrane region" description="Helical" evidence="1">
    <location>
        <begin position="245"/>
        <end position="265"/>
    </location>
</feature>
<feature type="topological domain" description="Vacuolar" evidence="1">
    <location>
        <begin position="266"/>
        <end position="277"/>
    </location>
</feature>
<feature type="transmembrane region" description="Helical" evidence="1">
    <location>
        <begin position="278"/>
        <end position="298"/>
    </location>
</feature>
<feature type="topological domain" description="Cytoplasmic" evidence="1">
    <location>
        <begin position="299"/>
        <end position="308"/>
    </location>
</feature>
<feature type="domain" description="PQ-loop 1">
    <location>
        <begin position="10"/>
        <end position="76"/>
    </location>
</feature>
<feature type="domain" description="PQ-loop 2">
    <location>
        <begin position="211"/>
        <end position="274"/>
    </location>
</feature>
<feature type="glycosylation site" description="N-linked (GlcNAc...) asparagine" evidence="1">
    <location>
        <position position="9"/>
    </location>
</feature>
<feature type="glycosylation site" description="N-linked (GlcNAc...) asparagine" evidence="1">
    <location>
        <position position="189"/>
    </location>
</feature>
<feature type="glycosylation site" description="N-linked (GlcNAc...) asparagine" evidence="1">
    <location>
        <position position="275"/>
    </location>
</feature>
<proteinExistence type="evidence at protein level"/>
<gene>
    <name type="primary">YPQ1</name>
    <name type="ordered locus">YOL092W</name>
    <name type="ORF">O0929</name>
</gene>
<evidence type="ECO:0000255" key="1"/>
<evidence type="ECO:0000269" key="2">
    <source>
    </source>
</evidence>
<evidence type="ECO:0000269" key="3">
    <source>
    </source>
</evidence>
<evidence type="ECO:0000269" key="4">
    <source>
    </source>
</evidence>
<evidence type="ECO:0000269" key="5">
    <source>
    </source>
</evidence>
<evidence type="ECO:0000269" key="6">
    <source>
    </source>
</evidence>
<evidence type="ECO:0000305" key="7"/>
<name>YPQ1_YEAST</name>
<keyword id="KW-0029">Amino-acid transport</keyword>
<keyword id="KW-0325">Glycoprotein</keyword>
<keyword id="KW-0472">Membrane</keyword>
<keyword id="KW-1185">Reference proteome</keyword>
<keyword id="KW-0677">Repeat</keyword>
<keyword id="KW-0812">Transmembrane</keyword>
<keyword id="KW-1133">Transmembrane helix</keyword>
<keyword id="KW-0813">Transport</keyword>
<keyword id="KW-0926">Vacuole</keyword>
<reference key="1">
    <citation type="journal article" date="1995" name="Yeast">
        <title>A 29.425 kb segment on the left arm of yeast chromosome XV contains more than twice as many unknown as known open reading frames.</title>
        <authorList>
            <person name="Zumstein E."/>
            <person name="Pearson B.M."/>
            <person name="Kalogeropoulos A."/>
            <person name="Schweizer M."/>
        </authorList>
    </citation>
    <scope>NUCLEOTIDE SEQUENCE [GENOMIC DNA]</scope>
    <source>
        <strain>ATCC 96604 / S288c / FY1679</strain>
    </source>
</reference>
<reference key="2">
    <citation type="journal article" date="1997" name="Nature">
        <title>The nucleotide sequence of Saccharomyces cerevisiae chromosome XV.</title>
        <authorList>
            <person name="Dujon B."/>
            <person name="Albermann K."/>
            <person name="Aldea M."/>
            <person name="Alexandraki D."/>
            <person name="Ansorge W."/>
            <person name="Arino J."/>
            <person name="Benes V."/>
            <person name="Bohn C."/>
            <person name="Bolotin-Fukuhara M."/>
            <person name="Bordonne R."/>
            <person name="Boyer J."/>
            <person name="Camasses A."/>
            <person name="Casamayor A."/>
            <person name="Casas C."/>
            <person name="Cheret G."/>
            <person name="Cziepluch C."/>
            <person name="Daignan-Fornier B."/>
            <person name="Dang V.-D."/>
            <person name="de Haan M."/>
            <person name="Delius H."/>
            <person name="Durand P."/>
            <person name="Fairhead C."/>
            <person name="Feldmann H."/>
            <person name="Gaillon L."/>
            <person name="Galisson F."/>
            <person name="Gamo F.-J."/>
            <person name="Gancedo C."/>
            <person name="Goffeau A."/>
            <person name="Goulding S.E."/>
            <person name="Grivell L.A."/>
            <person name="Habbig B."/>
            <person name="Hand N.J."/>
            <person name="Hani J."/>
            <person name="Hattenhorst U."/>
            <person name="Hebling U."/>
            <person name="Hernando Y."/>
            <person name="Herrero E."/>
            <person name="Heumann K."/>
            <person name="Hiesel R."/>
            <person name="Hilger F."/>
            <person name="Hofmann B."/>
            <person name="Hollenberg C.P."/>
            <person name="Hughes B."/>
            <person name="Jauniaux J.-C."/>
            <person name="Kalogeropoulos A."/>
            <person name="Katsoulou C."/>
            <person name="Kordes E."/>
            <person name="Lafuente M.J."/>
            <person name="Landt O."/>
            <person name="Louis E.J."/>
            <person name="Maarse A.C."/>
            <person name="Madania A."/>
            <person name="Mannhaupt G."/>
            <person name="Marck C."/>
            <person name="Martin R.P."/>
            <person name="Mewes H.-W."/>
            <person name="Michaux G."/>
            <person name="Paces V."/>
            <person name="Parle-McDermott A.G."/>
            <person name="Pearson B.M."/>
            <person name="Perrin A."/>
            <person name="Pettersson B."/>
            <person name="Poch O."/>
            <person name="Pohl T.M."/>
            <person name="Poirey R."/>
            <person name="Portetelle D."/>
            <person name="Pujol A."/>
            <person name="Purnelle B."/>
            <person name="Ramezani Rad M."/>
            <person name="Rechmann S."/>
            <person name="Schwager C."/>
            <person name="Schweizer M."/>
            <person name="Sor F."/>
            <person name="Sterky F."/>
            <person name="Tarassov I.A."/>
            <person name="Teodoru C."/>
            <person name="Tettelin H."/>
            <person name="Thierry A."/>
            <person name="Tobiasch E."/>
            <person name="Tzermia M."/>
            <person name="Uhlen M."/>
            <person name="Unseld M."/>
            <person name="Valens M."/>
            <person name="Vandenbol M."/>
            <person name="Vetter I."/>
            <person name="Vlcek C."/>
            <person name="Voet M."/>
            <person name="Volckaert G."/>
            <person name="Voss H."/>
            <person name="Wambutt R."/>
            <person name="Wedler H."/>
            <person name="Wiemann S."/>
            <person name="Winsor B."/>
            <person name="Wolfe K.H."/>
            <person name="Zollner A."/>
            <person name="Zumstein E."/>
            <person name="Kleine K."/>
        </authorList>
    </citation>
    <scope>NUCLEOTIDE SEQUENCE [LARGE SCALE GENOMIC DNA]</scope>
    <source>
        <strain>ATCC 204508 / S288c</strain>
    </source>
</reference>
<reference key="3">
    <citation type="journal article" date="2014" name="G3 (Bethesda)">
        <title>The reference genome sequence of Saccharomyces cerevisiae: Then and now.</title>
        <authorList>
            <person name="Engel S.R."/>
            <person name="Dietrich F.S."/>
            <person name="Fisk D.G."/>
            <person name="Binkley G."/>
            <person name="Balakrishnan R."/>
            <person name="Costanzo M.C."/>
            <person name="Dwight S.S."/>
            <person name="Hitz B.C."/>
            <person name="Karra K."/>
            <person name="Nash R.S."/>
            <person name="Weng S."/>
            <person name="Wong E.D."/>
            <person name="Lloyd P."/>
            <person name="Skrzypek M.S."/>
            <person name="Miyasato S.R."/>
            <person name="Simison M."/>
            <person name="Cherry J.M."/>
        </authorList>
    </citation>
    <scope>GENOME REANNOTATION</scope>
    <source>
        <strain>ATCC 204508 / S288c</strain>
    </source>
</reference>
<reference key="4">
    <citation type="journal article" date="2003" name="Nature">
        <title>Global analysis of protein localization in budding yeast.</title>
        <authorList>
            <person name="Huh W.-K."/>
            <person name="Falvo J.V."/>
            <person name="Gerke L.C."/>
            <person name="Carroll A.S."/>
            <person name="Howson R.W."/>
            <person name="Weissman J.S."/>
            <person name="O'Shea E.K."/>
        </authorList>
    </citation>
    <scope>SUBCELLULAR LOCATION [LARGE SCALE ANALYSIS]</scope>
</reference>
<reference key="5">
    <citation type="journal article" date="2003" name="Nature">
        <title>Global analysis of protein expression in yeast.</title>
        <authorList>
            <person name="Ghaemmaghami S."/>
            <person name="Huh W.-K."/>
            <person name="Bower K."/>
            <person name="Howson R.W."/>
            <person name="Belle A."/>
            <person name="Dephoure N."/>
            <person name="O'Shea E.K."/>
            <person name="Weissman J.S."/>
        </authorList>
    </citation>
    <scope>LEVEL OF PROTEIN EXPRESSION [LARGE SCALE ANALYSIS]</scope>
</reference>
<reference key="6">
    <citation type="journal article" date="2006" name="Proc. Natl. Acad. Sci. U.S.A.">
        <title>A global topology map of the Saccharomyces cerevisiae membrane proteome.</title>
        <authorList>
            <person name="Kim H."/>
            <person name="Melen K."/>
            <person name="Oesterberg M."/>
            <person name="von Heijne G."/>
        </authorList>
    </citation>
    <scope>TOPOLOGY [LARGE SCALE ANALYSIS]</scope>
    <source>
        <strain>ATCC 208353 / W303-1A</strain>
    </source>
</reference>
<reference key="7">
    <citation type="journal article" date="2008" name="Mol. Cell. Proteomics">
        <title>A multidimensional chromatography technology for in-depth phosphoproteome analysis.</title>
        <authorList>
            <person name="Albuquerque C.P."/>
            <person name="Smolka M.B."/>
            <person name="Payne S.H."/>
            <person name="Bafna V."/>
            <person name="Eng J."/>
            <person name="Zhou H."/>
        </authorList>
    </citation>
    <scope>IDENTIFICATION BY MASS SPECTROMETRY [LARGE SCALE ANALYSIS]</scope>
</reference>
<reference key="8">
    <citation type="journal article" date="2009" name="Science">
        <title>Global analysis of Cdk1 substrate phosphorylation sites provides insights into evolution.</title>
        <authorList>
            <person name="Holt L.J."/>
            <person name="Tuch B.B."/>
            <person name="Villen J."/>
            <person name="Johnson A.D."/>
            <person name="Gygi S.P."/>
            <person name="Morgan D.O."/>
        </authorList>
    </citation>
    <scope>IDENTIFICATION BY MASS SPECTROMETRY [LARGE SCALE ANALYSIS]</scope>
</reference>
<reference key="9">
    <citation type="journal article" date="2012" name="Proc. Natl. Acad. Sci. U.S.A.">
        <title>N-terminal acetylome analyses and functional insights of the N-terminal acetyltransferase NatB.</title>
        <authorList>
            <person name="Van Damme P."/>
            <person name="Lasa M."/>
            <person name="Polevoda B."/>
            <person name="Gazquez C."/>
            <person name="Elosegui-Artola A."/>
            <person name="Kim D.S."/>
            <person name="De Juan-Pardo E."/>
            <person name="Demeyer K."/>
            <person name="Hole K."/>
            <person name="Larrea E."/>
            <person name="Timmerman E."/>
            <person name="Prieto J."/>
            <person name="Arnesen T."/>
            <person name="Sherman F."/>
            <person name="Gevaert K."/>
            <person name="Aldabe R."/>
        </authorList>
    </citation>
    <scope>IDENTIFICATION BY MASS SPECTROMETRY [LARGE SCALE ANALYSIS]</scope>
</reference>
<reference key="10">
    <citation type="journal article" date="2012" name="Proc. Natl. Acad. Sci. U.S.A.">
        <title>Heptahelical protein PQLC2 is a lysosomal cationic amino acid exporter underlying the action of cysteamine in cystinosis therapy.</title>
        <authorList>
            <person name="Jezegou A."/>
            <person name="Llinares E."/>
            <person name="Anne C."/>
            <person name="Kieffer-Jaquinod S."/>
            <person name="O'Regan S."/>
            <person name="Aupetit J."/>
            <person name="Chabli A."/>
            <person name="Sagne C."/>
            <person name="Debacker C."/>
            <person name="Chadefaux-Vekemans B."/>
            <person name="Journet A."/>
            <person name="Andre B."/>
            <person name="Gasnier B."/>
        </authorList>
    </citation>
    <scope>FUNCTION</scope>
    <scope>SUBCELLULAR LOCATION</scope>
    <scope>DISRUPTION PHENOTYPE</scope>
</reference>
<reference key="11">
    <citation type="journal article" date="2014" name="Biosci. Biotechnol. Biochem.">
        <title>Loss of ATP-dependent lysine uptake in the vacuolar membrane vesicles of Saccharomyces cerevisiae ypq1 mutant.</title>
        <authorList>
            <person name="Sekito T."/>
            <person name="Nakamura K."/>
            <person name="Manabe K."/>
            <person name="Tone J."/>
            <person name="Sato Y."/>
            <person name="Murao N."/>
            <person name="Kawano-Kawada M."/>
            <person name="Kakinuma Y."/>
        </authorList>
    </citation>
    <scope>FUNCTION</scope>
    <scope>SUBCELLULAR LOCATION</scope>
    <scope>DISRUPTION PHENOTYPE</scope>
</reference>
<reference key="12">
    <citation type="journal article" date="2020" name="PLoS Genet.">
        <title>Nitrogen coordinated import and export of arginine across the yeast vacuolar membrane.</title>
        <authorList>
            <person name="Cools M."/>
            <person name="Lissoir S."/>
            <person name="Bodo E."/>
            <person name="Ulloa-Calzonzin J."/>
            <person name="DeLuna A."/>
            <person name="Georis I."/>
            <person name="Andre B."/>
        </authorList>
    </citation>
    <scope>FUNCTION</scope>
</reference>